<keyword id="KW-0256">Endoplasmic reticulum</keyword>
<keyword id="KW-0407">Ion channel</keyword>
<keyword id="KW-0406">Ion transport</keyword>
<keyword id="KW-0472">Membrane</keyword>
<keyword id="KW-0630">Potassium</keyword>
<keyword id="KW-0631">Potassium channel</keyword>
<keyword id="KW-0633">Potassium transport</keyword>
<keyword id="KW-1185">Reference proteome</keyword>
<keyword id="KW-0812">Transmembrane</keyword>
<keyword id="KW-1133">Transmembrane helix</keyword>
<keyword id="KW-0813">Transport</keyword>
<protein>
    <recommendedName>
        <fullName>Trimeric intracellular cation channel type B</fullName>
        <shortName>TRIC-B</shortName>
        <shortName>TRICB</shortName>
    </recommendedName>
    <alternativeName>
        <fullName>Mitsugumin-33B</fullName>
    </alternativeName>
    <alternativeName>
        <fullName>Transmembrane protein 38B</fullName>
    </alternativeName>
</protein>
<name>TM38B_MOUSE</name>
<accession>Q9DAV9</accession>
<accession>A2AQG4</accession>
<accession>Q3U6M4</accession>
<accession>Q3UBM6</accession>
<accession>Q3UWS8</accession>
<feature type="chain" id="PRO_0000291525" description="Trimeric intracellular cation channel type B">
    <location>
        <begin position="1"/>
        <end position="292"/>
    </location>
</feature>
<feature type="topological domain" description="Lumenal" evidence="6">
    <location>
        <begin position="1"/>
        <end position="16"/>
    </location>
</feature>
<feature type="transmembrane region" description="Helical;Name=1" evidence="3">
    <location>
        <begin position="17"/>
        <end position="34"/>
    </location>
</feature>
<feature type="topological domain" description="Cytoplasmic" evidence="6">
    <location>
        <begin position="35"/>
        <end position="47"/>
    </location>
</feature>
<feature type="transmembrane region" description="Helical;Name=2" evidence="3">
    <location>
        <begin position="48"/>
        <end position="69"/>
    </location>
</feature>
<feature type="topological domain" description="Lumenal" evidence="6">
    <location>
        <begin position="70"/>
        <end position="82"/>
    </location>
</feature>
<feature type="transmembrane region" description="Helical;Name=3" evidence="3">
    <location>
        <begin position="83"/>
        <end position="100"/>
    </location>
</feature>
<feature type="topological domain" description="Cytoplasmic" evidence="6">
    <location>
        <begin position="101"/>
        <end position="103"/>
    </location>
</feature>
<feature type="transmembrane region" description="Helical;Name=4" evidence="3">
    <location>
        <begin position="104"/>
        <end position="122"/>
    </location>
</feature>
<feature type="topological domain" description="Lumenal" evidence="6">
    <location>
        <begin position="123"/>
        <end position="140"/>
    </location>
</feature>
<feature type="transmembrane region" description="Helical;Name=5" evidence="3">
    <location>
        <begin position="141"/>
        <end position="158"/>
    </location>
</feature>
<feature type="topological domain" description="Cytoplasmic" evidence="6">
    <location>
        <begin position="159"/>
        <end position="178"/>
    </location>
</feature>
<feature type="transmembrane region" description="Helical;Name=6" evidence="3">
    <location>
        <begin position="179"/>
        <end position="195"/>
    </location>
</feature>
<feature type="topological domain" description="Lumenal" evidence="6">
    <location>
        <begin position="196"/>
        <end position="206"/>
    </location>
</feature>
<feature type="transmembrane region" description="Helical;Name=7" evidence="3">
    <location>
        <begin position="207"/>
        <end position="225"/>
    </location>
</feature>
<feature type="topological domain" description="Cytoplasmic" evidence="6">
    <location>
        <begin position="226"/>
        <end position="292"/>
    </location>
</feature>
<feature type="region of interest" description="Disordered" evidence="4">
    <location>
        <begin position="248"/>
        <end position="292"/>
    </location>
</feature>
<feature type="compositionally biased region" description="Low complexity" evidence="4">
    <location>
        <begin position="265"/>
        <end position="274"/>
    </location>
</feature>
<feature type="binding site" evidence="2">
    <location>
        <position position="118"/>
    </location>
    <ligand>
        <name>a 1,2-diacyl-sn-glycero-3-phospho-(1D-myo-inositol-4,5-bisphosphate)</name>
        <dbReference type="ChEBI" id="CHEBI:58456"/>
    </ligand>
</feature>
<feature type="binding site" evidence="2">
    <location>
        <position position="122"/>
    </location>
    <ligand>
        <name>a 1,2-diacyl-sn-glycero-3-phospho-(1D-myo-inositol-4,5-bisphosphate)</name>
        <dbReference type="ChEBI" id="CHEBI:58456"/>
    </ligand>
</feature>
<feature type="sequence conflict" description="In Ref. 2; BAE22836." evidence="6" ref="2">
    <original>M</original>
    <variation>I</variation>
    <location>
        <position position="192"/>
    </location>
</feature>
<feature type="sequence conflict" description="In Ref. 2; BAE31700." evidence="6" ref="2">
    <original>M</original>
    <variation>I</variation>
    <location>
        <position position="225"/>
    </location>
</feature>
<feature type="sequence conflict" description="In Ref. 2; BAE29509/BAE29938." evidence="6" ref="2">
    <original>E</original>
    <variation>G</variation>
    <location>
        <position position="291"/>
    </location>
</feature>
<evidence type="ECO:0000250" key="1">
    <source>
        <dbReference type="UniProtKB" id="Q6GN30"/>
    </source>
</evidence>
<evidence type="ECO:0000250" key="2">
    <source>
        <dbReference type="UniProtKB" id="Q9NA73"/>
    </source>
</evidence>
<evidence type="ECO:0000255" key="3"/>
<evidence type="ECO:0000256" key="4">
    <source>
        <dbReference type="SAM" id="MobiDB-lite"/>
    </source>
</evidence>
<evidence type="ECO:0000269" key="5">
    <source>
    </source>
</evidence>
<evidence type="ECO:0000305" key="6"/>
<sequence length="292" mass="32640">MEYPWDDLTLAFSRTSMFPFFDIAHYLVSVMALKQRPGAVAAAWNNPLASWLSAMLHCFGGGILSCMLLAESPLKFLTNHTNILLASSIWYIVFFCPRDLVSQGYSYQPIQFLAAGMKEVTRTWKIVGGVSDANSYYRNAWIVMIVVGWARGAGGAVVTACEQLLKGDWKPEGDEWLKMSFPCKITLLGSIMFTFQHTRHLAISKHDLMFLYTIFLVTIKVTMMMTKDTAVTLTPFEDTLTRMLFGRRQQQQFSSSEKKTEVKPSSNGSASSASKRGAEPSGGAKRHAKKED</sequence>
<gene>
    <name type="primary">Tmem38b</name>
    <name type="synonym">D4Ertd89e</name>
    <name type="synonym">Mg33b</name>
</gene>
<comment type="function">
    <text evidence="1">Intracellular monovalent cation channel required for maintenance of rapid intracellular calcium release. Acts as a potassium counter-ion channel that functions in synchronization with calcium release from intracellular stores. Activated by increased cytosolic Ca(2+) levels.</text>
</comment>
<comment type="catalytic activity">
    <reaction evidence="1">
        <text>K(+)(in) = K(+)(out)</text>
        <dbReference type="Rhea" id="RHEA:29463"/>
        <dbReference type="ChEBI" id="CHEBI:29103"/>
    </reaction>
</comment>
<comment type="activity regulation">
    <text evidence="1">Channel activity is activated by increased cytosolic Ca(2+) levels and blocked by luminal high Ca(2+) levels.</text>
</comment>
<comment type="subunit">
    <text evidence="1">Homotrimer; conformation seems to be controled by binding to diacylglycerol (DAG).</text>
</comment>
<comment type="subcellular location">
    <subcellularLocation>
        <location evidence="5">Endoplasmic reticulum membrane</location>
        <topology evidence="5">Multi-pass membrane protein</topology>
    </subcellularLocation>
</comment>
<comment type="tissue specificity">
    <text evidence="5">Widely expressed.</text>
</comment>
<comment type="disruption phenotype">
    <text evidence="5">Mice are neonatal lethal. Mice lacking Tmem38a and Tmem38b show a weak heartbeat at E9.5 followed by loss of cardiomyocyte viability and embryonic lethality around 10.5 dpc.</text>
</comment>
<comment type="similarity">
    <text evidence="6">Belongs to the TMEM38 family.</text>
</comment>
<comment type="sequence caution" evidence="6">
    <conflict type="erroneous gene model prediction">
        <sequence resource="EMBL-CDS" id="CAM21468"/>
    </conflict>
</comment>
<proteinExistence type="evidence at protein level"/>
<organism>
    <name type="scientific">Mus musculus</name>
    <name type="common">Mouse</name>
    <dbReference type="NCBI Taxonomy" id="10090"/>
    <lineage>
        <taxon>Eukaryota</taxon>
        <taxon>Metazoa</taxon>
        <taxon>Chordata</taxon>
        <taxon>Craniata</taxon>
        <taxon>Vertebrata</taxon>
        <taxon>Euteleostomi</taxon>
        <taxon>Mammalia</taxon>
        <taxon>Eutheria</taxon>
        <taxon>Euarchontoglires</taxon>
        <taxon>Glires</taxon>
        <taxon>Rodentia</taxon>
        <taxon>Myomorpha</taxon>
        <taxon>Muroidea</taxon>
        <taxon>Muridae</taxon>
        <taxon>Murinae</taxon>
        <taxon>Mus</taxon>
        <taxon>Mus</taxon>
    </lineage>
</organism>
<reference key="1">
    <citation type="journal article" date="2007" name="Nature">
        <title>TRIC channels are essential for Ca2+ handling in intracellular stores.</title>
        <authorList>
            <person name="Yazawa M."/>
            <person name="Ferrante C."/>
            <person name="Feng J."/>
            <person name="Mio K."/>
            <person name="Ogura T."/>
            <person name="Zhang M."/>
            <person name="Lin P.-H."/>
            <person name="Pan Z."/>
            <person name="Komazaki S."/>
            <person name="Kato K."/>
            <person name="Nishi M."/>
            <person name="Zhao X."/>
            <person name="Weisleder N."/>
            <person name="Sato C."/>
            <person name="Ma J."/>
            <person name="Takeshima H."/>
        </authorList>
    </citation>
    <scope>NUCLEOTIDE SEQUENCE [MRNA]</scope>
    <scope>SUBCELLULAR LOCATION</scope>
    <scope>TISSUE SPECIFICITY</scope>
    <scope>DISRUPTION PHENOTYPE</scope>
</reference>
<reference key="2">
    <citation type="journal article" date="2005" name="Science">
        <title>The transcriptional landscape of the mammalian genome.</title>
        <authorList>
            <person name="Carninci P."/>
            <person name="Kasukawa T."/>
            <person name="Katayama S."/>
            <person name="Gough J."/>
            <person name="Frith M.C."/>
            <person name="Maeda N."/>
            <person name="Oyama R."/>
            <person name="Ravasi T."/>
            <person name="Lenhard B."/>
            <person name="Wells C."/>
            <person name="Kodzius R."/>
            <person name="Shimokawa K."/>
            <person name="Bajic V.B."/>
            <person name="Brenner S.E."/>
            <person name="Batalov S."/>
            <person name="Forrest A.R."/>
            <person name="Zavolan M."/>
            <person name="Davis M.J."/>
            <person name="Wilming L.G."/>
            <person name="Aidinis V."/>
            <person name="Allen J.E."/>
            <person name="Ambesi-Impiombato A."/>
            <person name="Apweiler R."/>
            <person name="Aturaliya R.N."/>
            <person name="Bailey T.L."/>
            <person name="Bansal M."/>
            <person name="Baxter L."/>
            <person name="Beisel K.W."/>
            <person name="Bersano T."/>
            <person name="Bono H."/>
            <person name="Chalk A.M."/>
            <person name="Chiu K.P."/>
            <person name="Choudhary V."/>
            <person name="Christoffels A."/>
            <person name="Clutterbuck D.R."/>
            <person name="Crowe M.L."/>
            <person name="Dalla E."/>
            <person name="Dalrymple B.P."/>
            <person name="de Bono B."/>
            <person name="Della Gatta G."/>
            <person name="di Bernardo D."/>
            <person name="Down T."/>
            <person name="Engstrom P."/>
            <person name="Fagiolini M."/>
            <person name="Faulkner G."/>
            <person name="Fletcher C.F."/>
            <person name="Fukushima T."/>
            <person name="Furuno M."/>
            <person name="Futaki S."/>
            <person name="Gariboldi M."/>
            <person name="Georgii-Hemming P."/>
            <person name="Gingeras T.R."/>
            <person name="Gojobori T."/>
            <person name="Green R.E."/>
            <person name="Gustincich S."/>
            <person name="Harbers M."/>
            <person name="Hayashi Y."/>
            <person name="Hensch T.K."/>
            <person name="Hirokawa N."/>
            <person name="Hill D."/>
            <person name="Huminiecki L."/>
            <person name="Iacono M."/>
            <person name="Ikeo K."/>
            <person name="Iwama A."/>
            <person name="Ishikawa T."/>
            <person name="Jakt M."/>
            <person name="Kanapin A."/>
            <person name="Katoh M."/>
            <person name="Kawasawa Y."/>
            <person name="Kelso J."/>
            <person name="Kitamura H."/>
            <person name="Kitano H."/>
            <person name="Kollias G."/>
            <person name="Krishnan S.P."/>
            <person name="Kruger A."/>
            <person name="Kummerfeld S.K."/>
            <person name="Kurochkin I.V."/>
            <person name="Lareau L.F."/>
            <person name="Lazarevic D."/>
            <person name="Lipovich L."/>
            <person name="Liu J."/>
            <person name="Liuni S."/>
            <person name="McWilliam S."/>
            <person name="Madan Babu M."/>
            <person name="Madera M."/>
            <person name="Marchionni L."/>
            <person name="Matsuda H."/>
            <person name="Matsuzawa S."/>
            <person name="Miki H."/>
            <person name="Mignone F."/>
            <person name="Miyake S."/>
            <person name="Morris K."/>
            <person name="Mottagui-Tabar S."/>
            <person name="Mulder N."/>
            <person name="Nakano N."/>
            <person name="Nakauchi H."/>
            <person name="Ng P."/>
            <person name="Nilsson R."/>
            <person name="Nishiguchi S."/>
            <person name="Nishikawa S."/>
            <person name="Nori F."/>
            <person name="Ohara O."/>
            <person name="Okazaki Y."/>
            <person name="Orlando V."/>
            <person name="Pang K.C."/>
            <person name="Pavan W.J."/>
            <person name="Pavesi G."/>
            <person name="Pesole G."/>
            <person name="Petrovsky N."/>
            <person name="Piazza S."/>
            <person name="Reed J."/>
            <person name="Reid J.F."/>
            <person name="Ring B.Z."/>
            <person name="Ringwald M."/>
            <person name="Rost B."/>
            <person name="Ruan Y."/>
            <person name="Salzberg S.L."/>
            <person name="Sandelin A."/>
            <person name="Schneider C."/>
            <person name="Schoenbach C."/>
            <person name="Sekiguchi K."/>
            <person name="Semple C.A."/>
            <person name="Seno S."/>
            <person name="Sessa L."/>
            <person name="Sheng Y."/>
            <person name="Shibata Y."/>
            <person name="Shimada H."/>
            <person name="Shimada K."/>
            <person name="Silva D."/>
            <person name="Sinclair B."/>
            <person name="Sperling S."/>
            <person name="Stupka E."/>
            <person name="Sugiura K."/>
            <person name="Sultana R."/>
            <person name="Takenaka Y."/>
            <person name="Taki K."/>
            <person name="Tammoja K."/>
            <person name="Tan S.L."/>
            <person name="Tang S."/>
            <person name="Taylor M.S."/>
            <person name="Tegner J."/>
            <person name="Teichmann S.A."/>
            <person name="Ueda H.R."/>
            <person name="van Nimwegen E."/>
            <person name="Verardo R."/>
            <person name="Wei C.L."/>
            <person name="Yagi K."/>
            <person name="Yamanishi H."/>
            <person name="Zabarovsky E."/>
            <person name="Zhu S."/>
            <person name="Zimmer A."/>
            <person name="Hide W."/>
            <person name="Bult C."/>
            <person name="Grimmond S.M."/>
            <person name="Teasdale R.D."/>
            <person name="Liu E.T."/>
            <person name="Brusic V."/>
            <person name="Quackenbush J."/>
            <person name="Wahlestedt C."/>
            <person name="Mattick J.S."/>
            <person name="Hume D.A."/>
            <person name="Kai C."/>
            <person name="Sasaki D."/>
            <person name="Tomaru Y."/>
            <person name="Fukuda S."/>
            <person name="Kanamori-Katayama M."/>
            <person name="Suzuki M."/>
            <person name="Aoki J."/>
            <person name="Arakawa T."/>
            <person name="Iida J."/>
            <person name="Imamura K."/>
            <person name="Itoh M."/>
            <person name="Kato T."/>
            <person name="Kawaji H."/>
            <person name="Kawagashira N."/>
            <person name="Kawashima T."/>
            <person name="Kojima M."/>
            <person name="Kondo S."/>
            <person name="Konno H."/>
            <person name="Nakano K."/>
            <person name="Ninomiya N."/>
            <person name="Nishio T."/>
            <person name="Okada M."/>
            <person name="Plessy C."/>
            <person name="Shibata K."/>
            <person name="Shiraki T."/>
            <person name="Suzuki S."/>
            <person name="Tagami M."/>
            <person name="Waki K."/>
            <person name="Watahiki A."/>
            <person name="Okamura-Oho Y."/>
            <person name="Suzuki H."/>
            <person name="Kawai J."/>
            <person name="Hayashizaki Y."/>
        </authorList>
    </citation>
    <scope>NUCLEOTIDE SEQUENCE [LARGE SCALE MRNA]</scope>
    <source>
        <strain>C57BL/6J</strain>
        <tissue>Bone marrow</tissue>
        <tissue>Egg</tissue>
        <tissue>Placenta</tissue>
    </source>
</reference>
<reference key="3">
    <citation type="journal article" date="2009" name="PLoS Biol.">
        <title>Lineage-specific biology revealed by a finished genome assembly of the mouse.</title>
        <authorList>
            <person name="Church D.M."/>
            <person name="Goodstadt L."/>
            <person name="Hillier L.W."/>
            <person name="Zody M.C."/>
            <person name="Goldstein S."/>
            <person name="She X."/>
            <person name="Bult C.J."/>
            <person name="Agarwala R."/>
            <person name="Cherry J.L."/>
            <person name="DiCuccio M."/>
            <person name="Hlavina W."/>
            <person name="Kapustin Y."/>
            <person name="Meric P."/>
            <person name="Maglott D."/>
            <person name="Birtle Z."/>
            <person name="Marques A.C."/>
            <person name="Graves T."/>
            <person name="Zhou S."/>
            <person name="Teague B."/>
            <person name="Potamousis K."/>
            <person name="Churas C."/>
            <person name="Place M."/>
            <person name="Herschleb J."/>
            <person name="Runnheim R."/>
            <person name="Forrest D."/>
            <person name="Amos-Landgraf J."/>
            <person name="Schwartz D.C."/>
            <person name="Cheng Z."/>
            <person name="Lindblad-Toh K."/>
            <person name="Eichler E.E."/>
            <person name="Ponting C.P."/>
        </authorList>
    </citation>
    <scope>NUCLEOTIDE SEQUENCE [LARGE SCALE GENOMIC DNA]</scope>
    <source>
        <strain>C57BL/6J</strain>
    </source>
</reference>
<reference key="4">
    <citation type="journal article" date="2004" name="Genome Res.">
        <title>The status, quality, and expansion of the NIH full-length cDNA project: the Mammalian Gene Collection (MGC).</title>
        <authorList>
            <consortium name="The MGC Project Team"/>
        </authorList>
    </citation>
    <scope>NUCLEOTIDE SEQUENCE [LARGE SCALE MRNA]</scope>
    <source>
        <strain>FVB/N</strain>
        <tissue>Mammary tumor</tissue>
    </source>
</reference>
<reference key="5">
    <citation type="journal article" date="2010" name="Cell">
        <title>A tissue-specific atlas of mouse protein phosphorylation and expression.</title>
        <authorList>
            <person name="Huttlin E.L."/>
            <person name="Jedrychowski M.P."/>
            <person name="Elias J.E."/>
            <person name="Goswami T."/>
            <person name="Rad R."/>
            <person name="Beausoleil S.A."/>
            <person name="Villen J."/>
            <person name="Haas W."/>
            <person name="Sowa M.E."/>
            <person name="Gygi S.P."/>
        </authorList>
    </citation>
    <scope>IDENTIFICATION BY MASS SPECTROMETRY [LARGE SCALE ANALYSIS]</scope>
    <source>
        <tissue>Brown adipose tissue</tissue>
        <tissue>Kidney</tissue>
        <tissue>Liver</tissue>
        <tissue>Lung</tissue>
        <tissue>Testis</tissue>
    </source>
</reference>
<dbReference type="EMBL" id="AB261159">
    <property type="protein sequence ID" value="BAF62542.1"/>
    <property type="molecule type" value="mRNA"/>
</dbReference>
<dbReference type="EMBL" id="AK005479">
    <property type="protein sequence ID" value="BAB24068.1"/>
    <property type="molecule type" value="mRNA"/>
</dbReference>
<dbReference type="EMBL" id="AK136131">
    <property type="protein sequence ID" value="BAE22836.1"/>
    <property type="molecule type" value="mRNA"/>
</dbReference>
<dbReference type="EMBL" id="AK150377">
    <property type="protein sequence ID" value="BAE29509.1"/>
    <property type="molecule type" value="mRNA"/>
</dbReference>
<dbReference type="EMBL" id="AK150892">
    <property type="protein sequence ID" value="BAE29938.1"/>
    <property type="molecule type" value="mRNA"/>
</dbReference>
<dbReference type="EMBL" id="AK153075">
    <property type="protein sequence ID" value="BAE31700.1"/>
    <property type="molecule type" value="mRNA"/>
</dbReference>
<dbReference type="EMBL" id="AL844585">
    <property type="protein sequence ID" value="CAM21467.1"/>
    <property type="molecule type" value="Genomic_DNA"/>
</dbReference>
<dbReference type="EMBL" id="AL844585">
    <property type="protein sequence ID" value="CAM21468.1"/>
    <property type="status" value="ALT_SEQ"/>
    <property type="molecule type" value="Genomic_DNA"/>
</dbReference>
<dbReference type="EMBL" id="BC011072">
    <property type="protein sequence ID" value="AAH11072.1"/>
    <property type="molecule type" value="mRNA"/>
</dbReference>
<dbReference type="CCDS" id="CCDS18193.1"/>
<dbReference type="RefSeq" id="NP_082329.1">
    <property type="nucleotide sequence ID" value="NM_028053.2"/>
</dbReference>
<dbReference type="SMR" id="Q9DAV9"/>
<dbReference type="BioGRID" id="206367">
    <property type="interactions" value="6"/>
</dbReference>
<dbReference type="FunCoup" id="Q9DAV9">
    <property type="interactions" value="1091"/>
</dbReference>
<dbReference type="IntAct" id="Q9DAV9">
    <property type="interactions" value="1"/>
</dbReference>
<dbReference type="MINT" id="Q9DAV9"/>
<dbReference type="STRING" id="10090.ENSMUSP00000030127"/>
<dbReference type="TCDB" id="1.A.62.1.2">
    <property type="family name" value="the homotrimeric cation channel (tric) family"/>
</dbReference>
<dbReference type="PhosphoSitePlus" id="Q9DAV9"/>
<dbReference type="SwissPalm" id="Q9DAV9"/>
<dbReference type="jPOST" id="Q9DAV9"/>
<dbReference type="PaxDb" id="10090-ENSMUSP00000030127"/>
<dbReference type="PeptideAtlas" id="Q9DAV9"/>
<dbReference type="ProteomicsDB" id="259114"/>
<dbReference type="Pumba" id="Q9DAV9"/>
<dbReference type="Antibodypedia" id="14850">
    <property type="antibodies" value="99 antibodies from 25 providers"/>
</dbReference>
<dbReference type="DNASU" id="52076"/>
<dbReference type="Ensembl" id="ENSMUST00000030127.13">
    <property type="protein sequence ID" value="ENSMUSP00000030127.7"/>
    <property type="gene ID" value="ENSMUSG00000028420.14"/>
</dbReference>
<dbReference type="GeneID" id="52076"/>
<dbReference type="KEGG" id="mmu:52076"/>
<dbReference type="UCSC" id="uc008sxh.2">
    <property type="organism name" value="mouse"/>
</dbReference>
<dbReference type="AGR" id="MGI:1098718"/>
<dbReference type="CTD" id="55151"/>
<dbReference type="MGI" id="MGI:1098718">
    <property type="gene designation" value="Tmem38b"/>
</dbReference>
<dbReference type="VEuPathDB" id="HostDB:ENSMUSG00000028420"/>
<dbReference type="eggNOG" id="KOG3944">
    <property type="taxonomic scope" value="Eukaryota"/>
</dbReference>
<dbReference type="GeneTree" id="ENSGT00390000018845"/>
<dbReference type="HOGENOM" id="CLU_076376_0_0_1"/>
<dbReference type="InParanoid" id="Q9DAV9"/>
<dbReference type="OMA" id="HNELLRP"/>
<dbReference type="OrthoDB" id="195817at2759"/>
<dbReference type="PhylomeDB" id="Q9DAV9"/>
<dbReference type="TreeFam" id="TF313483"/>
<dbReference type="BioGRID-ORCS" id="52076">
    <property type="hits" value="2 hits in 76 CRISPR screens"/>
</dbReference>
<dbReference type="ChiTaRS" id="Tmem38b">
    <property type="organism name" value="mouse"/>
</dbReference>
<dbReference type="PRO" id="PR:Q9DAV9"/>
<dbReference type="Proteomes" id="UP000000589">
    <property type="component" value="Chromosome 4"/>
</dbReference>
<dbReference type="RNAct" id="Q9DAV9">
    <property type="molecule type" value="protein"/>
</dbReference>
<dbReference type="Bgee" id="ENSMUSG00000028420">
    <property type="expression patterns" value="Expressed in gastrula and 217 other cell types or tissues"/>
</dbReference>
<dbReference type="ExpressionAtlas" id="Q9DAV9">
    <property type="expression patterns" value="baseline and differential"/>
</dbReference>
<dbReference type="GO" id="GO:0005789">
    <property type="term" value="C:endoplasmic reticulum membrane"/>
    <property type="evidence" value="ECO:0000314"/>
    <property type="project" value="MGI"/>
</dbReference>
<dbReference type="GO" id="GO:0042802">
    <property type="term" value="F:identical protein binding"/>
    <property type="evidence" value="ECO:0007669"/>
    <property type="project" value="InterPro"/>
</dbReference>
<dbReference type="GO" id="GO:0005267">
    <property type="term" value="F:potassium channel activity"/>
    <property type="evidence" value="ECO:0000250"/>
    <property type="project" value="UniProtKB"/>
</dbReference>
<dbReference type="GO" id="GO:0060348">
    <property type="term" value="P:bone development"/>
    <property type="evidence" value="ECO:0000315"/>
    <property type="project" value="MGI"/>
</dbReference>
<dbReference type="GO" id="GO:0030282">
    <property type="term" value="P:bone mineralization"/>
    <property type="evidence" value="ECO:0000315"/>
    <property type="project" value="MGI"/>
</dbReference>
<dbReference type="GO" id="GO:0071313">
    <property type="term" value="P:cellular response to caffeine"/>
    <property type="evidence" value="ECO:0000316"/>
    <property type="project" value="MGI"/>
</dbReference>
<dbReference type="GO" id="GO:0007029">
    <property type="term" value="P:endoplasmic reticulum organization"/>
    <property type="evidence" value="ECO:0000315"/>
    <property type="project" value="MGI"/>
</dbReference>
<dbReference type="GO" id="GO:0051649">
    <property type="term" value="P:establishment of localization in cell"/>
    <property type="evidence" value="ECO:0000315"/>
    <property type="project" value="MGI"/>
</dbReference>
<dbReference type="GO" id="GO:0070278">
    <property type="term" value="P:extracellular matrix constituent secretion"/>
    <property type="evidence" value="ECO:0000315"/>
    <property type="project" value="MGI"/>
</dbReference>
<dbReference type="GO" id="GO:0048286">
    <property type="term" value="P:lung alveolus development"/>
    <property type="evidence" value="ECO:0000315"/>
    <property type="project" value="MGI"/>
</dbReference>
<dbReference type="GO" id="GO:0060487">
    <property type="term" value="P:lung epithelial cell differentiation"/>
    <property type="evidence" value="ECO:0000315"/>
    <property type="project" value="MGI"/>
</dbReference>
<dbReference type="GO" id="GO:0001503">
    <property type="term" value="P:ossification"/>
    <property type="evidence" value="ECO:0000315"/>
    <property type="project" value="MGI"/>
</dbReference>
<dbReference type="GO" id="GO:0008654">
    <property type="term" value="P:phospholipid biosynthetic process"/>
    <property type="evidence" value="ECO:0000315"/>
    <property type="project" value="MGI"/>
</dbReference>
<dbReference type="GO" id="GO:0010881">
    <property type="term" value="P:regulation of cardiac muscle contraction by regulation of the release of sequestered calcium ion"/>
    <property type="evidence" value="ECO:0000316"/>
    <property type="project" value="MGI"/>
</dbReference>
<dbReference type="GO" id="GO:0051279">
    <property type="term" value="P:regulation of release of sequestered calcium ion into cytosol"/>
    <property type="evidence" value="ECO:0000250"/>
    <property type="project" value="UniProtKB"/>
</dbReference>
<dbReference type="GO" id="GO:0051209">
    <property type="term" value="P:release of sequestered calcium ion into cytosol"/>
    <property type="evidence" value="ECO:0000315"/>
    <property type="project" value="MGI"/>
</dbReference>
<dbReference type="GO" id="GO:1903514">
    <property type="term" value="P:release of sequestered calcium ion into cytosol by endoplasmic reticulum"/>
    <property type="evidence" value="ECO:0000315"/>
    <property type="project" value="MGI"/>
</dbReference>
<dbReference type="GO" id="GO:0014808">
    <property type="term" value="P:release of sequestered calcium ion into cytosol by sarcoplasmic reticulum"/>
    <property type="evidence" value="ECO:0000316"/>
    <property type="project" value="MGI"/>
</dbReference>
<dbReference type="GO" id="GO:0061033">
    <property type="term" value="P:secretion by lung epithelial cell involved in lung growth"/>
    <property type="evidence" value="ECO:0000315"/>
    <property type="project" value="MGI"/>
</dbReference>
<dbReference type="InterPro" id="IPR007866">
    <property type="entry name" value="TRIC_channel"/>
</dbReference>
<dbReference type="PANTHER" id="PTHR12454">
    <property type="entry name" value="TRIMERIC INTRACELLULAR CATION CHANNEL"/>
    <property type="match status" value="1"/>
</dbReference>
<dbReference type="PANTHER" id="PTHR12454:SF5">
    <property type="entry name" value="TRIMERIC INTRACELLULAR CATION CHANNEL TYPE B"/>
    <property type="match status" value="1"/>
</dbReference>
<dbReference type="Pfam" id="PF05197">
    <property type="entry name" value="TRIC"/>
    <property type="match status" value="1"/>
</dbReference>